<dbReference type="EC" id="7.3.2.7"/>
<dbReference type="EMBL" id="AE006470">
    <property type="protein sequence ID" value="AAM73164.1"/>
    <property type="molecule type" value="Genomic_DNA"/>
</dbReference>
<dbReference type="EMBL" id="U09866">
    <property type="protein sequence ID" value="AAA18790.1"/>
    <property type="molecule type" value="Unassigned_DNA"/>
</dbReference>
<dbReference type="RefSeq" id="NP_662822.1">
    <property type="nucleotide sequence ID" value="NC_002932.3"/>
</dbReference>
<dbReference type="RefSeq" id="WP_010933602.1">
    <property type="nucleotide sequence ID" value="NC_002932.3"/>
</dbReference>
<dbReference type="SMR" id="Q46366"/>
<dbReference type="DNASU" id="1008253"/>
<dbReference type="EnsemblBacteria" id="AAM73164">
    <property type="protein sequence ID" value="AAM73164"/>
    <property type="gene ID" value="CT1945"/>
</dbReference>
<dbReference type="KEGG" id="cte:CT1945"/>
<dbReference type="PATRIC" id="fig|194439.7.peg.1762"/>
<dbReference type="eggNOG" id="COG0003">
    <property type="taxonomic scope" value="Bacteria"/>
</dbReference>
<dbReference type="HOGENOM" id="CLU_040761_1_0_10"/>
<dbReference type="OrthoDB" id="9780677at2"/>
<dbReference type="Proteomes" id="UP000001007">
    <property type="component" value="Chromosome"/>
</dbReference>
<dbReference type="GO" id="GO:0005524">
    <property type="term" value="F:ATP binding"/>
    <property type="evidence" value="ECO:0007669"/>
    <property type="project" value="UniProtKB-KW"/>
</dbReference>
<dbReference type="GO" id="GO:0016887">
    <property type="term" value="F:ATP hydrolysis activity"/>
    <property type="evidence" value="ECO:0007669"/>
    <property type="project" value="InterPro"/>
</dbReference>
<dbReference type="GO" id="GO:0015446">
    <property type="term" value="F:ATPase-coupled arsenite transmembrane transporter activity"/>
    <property type="evidence" value="ECO:0007669"/>
    <property type="project" value="UniProtKB-EC"/>
</dbReference>
<dbReference type="CDD" id="cd02035">
    <property type="entry name" value="ArsA"/>
    <property type="match status" value="1"/>
</dbReference>
<dbReference type="FunFam" id="3.40.50.300:FF:001801">
    <property type="entry name" value="Putative arsenical pump-driving ATPase"/>
    <property type="match status" value="1"/>
</dbReference>
<dbReference type="Gene3D" id="2.60.40.790">
    <property type="match status" value="1"/>
</dbReference>
<dbReference type="Gene3D" id="3.40.50.300">
    <property type="entry name" value="P-loop containing nucleotide triphosphate hydrolases"/>
    <property type="match status" value="1"/>
</dbReference>
<dbReference type="InterPro" id="IPR025723">
    <property type="entry name" value="Anion-transp_ATPase-like_dom"/>
</dbReference>
<dbReference type="InterPro" id="IPR040612">
    <property type="entry name" value="ArsA_HSP20-like"/>
</dbReference>
<dbReference type="InterPro" id="IPR016300">
    <property type="entry name" value="ATPase_ArsA/GET3"/>
</dbReference>
<dbReference type="InterPro" id="IPR008978">
    <property type="entry name" value="HSP20-like_chaperone"/>
</dbReference>
<dbReference type="InterPro" id="IPR027417">
    <property type="entry name" value="P-loop_NTPase"/>
</dbReference>
<dbReference type="NCBIfam" id="TIGR00345">
    <property type="entry name" value="GET3_arsA_TRC40"/>
    <property type="match status" value="1"/>
</dbReference>
<dbReference type="PANTHER" id="PTHR10803">
    <property type="entry name" value="ARSENICAL PUMP-DRIVING ATPASE ARSENITE-TRANSLOCATING ATPASE"/>
    <property type="match status" value="1"/>
</dbReference>
<dbReference type="PANTHER" id="PTHR10803:SF3">
    <property type="entry name" value="ATPASE GET3"/>
    <property type="match status" value="1"/>
</dbReference>
<dbReference type="Pfam" id="PF02374">
    <property type="entry name" value="ArsA_ATPase"/>
    <property type="match status" value="1"/>
</dbReference>
<dbReference type="Pfam" id="PF17886">
    <property type="entry name" value="ArsA_HSP20"/>
    <property type="match status" value="1"/>
</dbReference>
<dbReference type="SUPFAM" id="SSF52540">
    <property type="entry name" value="P-loop containing nucleoside triphosphate hydrolases"/>
    <property type="match status" value="1"/>
</dbReference>
<keyword id="KW-0059">Arsenical resistance</keyword>
<keyword id="KW-0067">ATP-binding</keyword>
<keyword id="KW-0547">Nucleotide-binding</keyword>
<keyword id="KW-1185">Reference proteome</keyword>
<keyword id="KW-1278">Translocase</keyword>
<name>ARSA_CHLTE</name>
<comment type="function">
    <text evidence="1">Anion-transporting ATPase. Catalyzes the extrusion of arsenite (By similarity).</text>
</comment>
<comment type="catalytic activity">
    <reaction>
        <text>arsenite(in) + ATP + H2O = arsenite(out) + ADP + phosphate + H(+)</text>
        <dbReference type="Rhea" id="RHEA:11348"/>
        <dbReference type="ChEBI" id="CHEBI:15377"/>
        <dbReference type="ChEBI" id="CHEBI:15378"/>
        <dbReference type="ChEBI" id="CHEBI:29242"/>
        <dbReference type="ChEBI" id="CHEBI:30616"/>
        <dbReference type="ChEBI" id="CHEBI:43474"/>
        <dbReference type="ChEBI" id="CHEBI:456216"/>
        <dbReference type="EC" id="7.3.2.7"/>
    </reaction>
</comment>
<comment type="similarity">
    <text evidence="3">Belongs to the arsA ATPase family.</text>
</comment>
<reference key="1">
    <citation type="journal article" date="2002" name="Proc. Natl. Acad. Sci. U.S.A.">
        <title>The complete genome sequence of Chlorobium tepidum TLS, a photosynthetic, anaerobic, green-sulfur bacterium.</title>
        <authorList>
            <person name="Eisen J.A."/>
            <person name="Nelson K.E."/>
            <person name="Paulsen I.T."/>
            <person name="Heidelberg J.F."/>
            <person name="Wu M."/>
            <person name="Dodson R.J."/>
            <person name="DeBoy R.T."/>
            <person name="Gwinn M.L."/>
            <person name="Nelson W.C."/>
            <person name="Haft D.H."/>
            <person name="Hickey E.K."/>
            <person name="Peterson J.D."/>
            <person name="Durkin A.S."/>
            <person name="Kolonay J.F."/>
            <person name="Yang F."/>
            <person name="Holt I.E."/>
            <person name="Umayam L.A."/>
            <person name="Mason T.M."/>
            <person name="Brenner M."/>
            <person name="Shea T.P."/>
            <person name="Parksey D.S."/>
            <person name="Nierman W.C."/>
            <person name="Feldblyum T.V."/>
            <person name="Hansen C.L."/>
            <person name="Craven M.B."/>
            <person name="Radune D."/>
            <person name="Vamathevan J.J."/>
            <person name="Khouri H.M."/>
            <person name="White O."/>
            <person name="Gruber T.M."/>
            <person name="Ketchum K.A."/>
            <person name="Venter J.C."/>
            <person name="Tettelin H."/>
            <person name="Bryant D.A."/>
            <person name="Fraser C.M."/>
        </authorList>
    </citation>
    <scope>NUCLEOTIDE SEQUENCE [LARGE SCALE GENOMIC DNA]</scope>
    <source>
        <strain>ATCC 49652 / DSM 12025 / NBRC 103806 / TLS</strain>
    </source>
</reference>
<reference key="2">
    <citation type="journal article" date="1994" name="Photosyn. Res.">
        <title>Genes encoding two chlorosome components from the green sulfur bacteria Chlorobium vibrioforme strain 8327D and Chlorobium tepidum.</title>
        <authorList>
            <person name="Chung S."/>
            <person name="Frank G."/>
            <person name="Zuber H."/>
            <person name="Bryant D.A."/>
        </authorList>
    </citation>
    <scope>NUCLEOTIDE SEQUENCE [GENOMIC DNA] OF 334-405</scope>
</reference>
<sequence length="405" mass="45848">MRILTFTGKGGVGKTSVSAATAVRLSEMGHRTLVLSTDPAHSLSDSFNIQLGAEPTKIKENLHAIEVNPYVDLKQNWHSVQKYYTRIFMAQGVSGVMADEMTILPGMEELFSLLRIKRYKSAGLYDALVLDTAPTGETLRLLSLPDTLSWGMKAVKNVNKYIVRPLSKPLSKMSDKIAYYIPPEDAIESVDQVFDELEDIREILTDNVKSTVRLVMNAEKMSIKETMRALTYLNLYGFKVDMVLVNKLLDAQENSGYLEKWKGIQQKYLGEIEEGFSPLPVKKLKMYDQEIVGVKSLEVFAHDIYGDTDPSGMMYDEPPIKFVRQGDVYEVQLKLMFANPVDIDVWVTGDELFVQIGNQRKIITLPVSLTGLEPGDAVFKDKWLHIPFDLEKQGQHHRTREYNKA</sequence>
<accession>Q46366</accession>
<evidence type="ECO:0000250" key="1"/>
<evidence type="ECO:0000255" key="2"/>
<evidence type="ECO:0000305" key="3"/>
<protein>
    <recommendedName>
        <fullName>Putative arsenical pump-driving ATPase</fullName>
        <ecNumber>7.3.2.7</ecNumber>
    </recommendedName>
    <alternativeName>
        <fullName>Arsenical resistance ATPase</fullName>
    </alternativeName>
    <alternativeName>
        <fullName>Arsenite-translocating ATPase</fullName>
    </alternativeName>
    <alternativeName>
        <fullName>Arsenite-transporting ATPase</fullName>
    </alternativeName>
</protein>
<feature type="chain" id="PRO_0000152262" description="Putative arsenical pump-driving ATPase">
    <location>
        <begin position="1"/>
        <end position="405"/>
    </location>
</feature>
<feature type="binding site" evidence="2">
    <location>
        <begin position="8"/>
        <end position="15"/>
    </location>
    <ligand>
        <name>ATP</name>
        <dbReference type="ChEBI" id="CHEBI:30616"/>
    </ligand>
</feature>
<feature type="sequence conflict" description="In Ref. 2; AAA18790." evidence="3" ref="2">
    <original>P</original>
    <variation>A</variation>
    <location>
        <position position="374"/>
    </location>
</feature>
<gene>
    <name type="ordered locus">CT1945</name>
</gene>
<proteinExistence type="inferred from homology"/>
<organism>
    <name type="scientific">Chlorobaculum tepidum (strain ATCC 49652 / DSM 12025 / NBRC 103806 / TLS)</name>
    <name type="common">Chlorobium tepidum</name>
    <dbReference type="NCBI Taxonomy" id="194439"/>
    <lineage>
        <taxon>Bacteria</taxon>
        <taxon>Pseudomonadati</taxon>
        <taxon>Chlorobiota</taxon>
        <taxon>Chlorobiia</taxon>
        <taxon>Chlorobiales</taxon>
        <taxon>Chlorobiaceae</taxon>
        <taxon>Chlorobaculum</taxon>
    </lineage>
</organism>